<dbReference type="EMBL" id="AF030099">
    <property type="protein sequence ID" value="AAC51923.1"/>
    <property type="molecule type" value="mRNA"/>
</dbReference>
<dbReference type="EMBL" id="AF055872">
    <property type="protein sequence ID" value="AAC39724.1"/>
    <property type="molecule type" value="mRNA"/>
</dbReference>
<dbReference type="EMBL" id="AY081051">
    <property type="protein sequence ID" value="AAL90443.1"/>
    <property type="molecule type" value="mRNA"/>
</dbReference>
<dbReference type="EMBL" id="AY358870">
    <property type="protein sequence ID" value="AAQ89229.1"/>
    <property type="molecule type" value="mRNA"/>
</dbReference>
<dbReference type="EMBL" id="AC016876">
    <property type="status" value="NOT_ANNOTATED_CDS"/>
    <property type="molecule type" value="Genomic_DNA"/>
</dbReference>
<dbReference type="EMBL" id="BC019047">
    <property type="protein sequence ID" value="AAH19047.1"/>
    <property type="status" value="ALT_FRAME"/>
    <property type="molecule type" value="mRNA"/>
</dbReference>
<dbReference type="CCDS" id="CCDS11109.1">
    <molecule id="O43508-1"/>
</dbReference>
<dbReference type="RefSeq" id="NP_003800.1">
    <molecule id="O43508-1"/>
    <property type="nucleotide sequence ID" value="NM_003809.3"/>
</dbReference>
<dbReference type="RefSeq" id="NP_742086.1">
    <molecule id="O43508-2"/>
    <property type="nucleotide sequence ID" value="NM_172089.3"/>
</dbReference>
<dbReference type="PDB" id="4HT1">
    <property type="method" value="X-ray"/>
    <property type="resolution" value="2.50 A"/>
    <property type="chains" value="T=97-249"/>
</dbReference>
<dbReference type="PDBsum" id="4HT1"/>
<dbReference type="SMR" id="O43508"/>
<dbReference type="BioGRID" id="114279">
    <property type="interactions" value="22"/>
</dbReference>
<dbReference type="BioGRID" id="135910">
    <property type="interactions" value="47"/>
</dbReference>
<dbReference type="FunCoup" id="O43508">
    <property type="interactions" value="395"/>
</dbReference>
<dbReference type="IntAct" id="O43508">
    <property type="interactions" value="10"/>
</dbReference>
<dbReference type="MINT" id="O43508"/>
<dbReference type="STRING" id="9606.ENSP00000293825"/>
<dbReference type="ChEMBL" id="CHEMBL3713023"/>
<dbReference type="GlyCosmos" id="O43508">
    <property type="glycosylation" value="2 sites, 1 glycan"/>
</dbReference>
<dbReference type="GlyGen" id="O43508">
    <property type="glycosylation" value="2 sites, 1 O-linked glycan (1 site)"/>
</dbReference>
<dbReference type="iPTMnet" id="O43508"/>
<dbReference type="PhosphoSitePlus" id="O43508"/>
<dbReference type="BioMuta" id="TNFSF12"/>
<dbReference type="MassIVE" id="O43508"/>
<dbReference type="PaxDb" id="9606-ENSP00000293825"/>
<dbReference type="PeptideAtlas" id="O43508"/>
<dbReference type="ProteomicsDB" id="49000">
    <molecule id="O43508-1"/>
</dbReference>
<dbReference type="ProteomicsDB" id="71365"/>
<dbReference type="ABCD" id="O43508">
    <property type="antibodies" value="1 sequenced antibody"/>
</dbReference>
<dbReference type="Antibodypedia" id="34916">
    <property type="antibodies" value="594 antibodies from 41 providers"/>
</dbReference>
<dbReference type="DNASU" id="407977"/>
<dbReference type="DNASU" id="8742"/>
<dbReference type="Ensembl" id="ENST00000293825.11">
    <molecule id="O43508-1"/>
    <property type="protein sequence ID" value="ENSP00000293825.6"/>
    <property type="gene ID" value="ENSG00000239697.12"/>
</dbReference>
<dbReference type="GeneID" id="8742"/>
<dbReference type="KEGG" id="hsa:407977"/>
<dbReference type="KEGG" id="hsa:8742"/>
<dbReference type="MANE-Select" id="ENST00000293825.11">
    <property type="protein sequence ID" value="ENSP00000293825.6"/>
    <property type="RefSeq nucleotide sequence ID" value="NM_003809.3"/>
    <property type="RefSeq protein sequence ID" value="NP_003800.1"/>
</dbReference>
<dbReference type="AGR" id="HGNC:11927"/>
<dbReference type="AGR" id="HGNC:33537"/>
<dbReference type="CTD" id="407977"/>
<dbReference type="CTD" id="8742"/>
<dbReference type="DisGeNET" id="407977"/>
<dbReference type="DisGeNET" id="8742"/>
<dbReference type="GeneCards" id="TNFSF12"/>
<dbReference type="HGNC" id="HGNC:11927">
    <property type="gene designation" value="TNFSF12"/>
</dbReference>
<dbReference type="HPA" id="ENSG00000239697">
    <property type="expression patterns" value="Low tissue specificity"/>
</dbReference>
<dbReference type="MalaCards" id="TNFSF12"/>
<dbReference type="MIM" id="602695">
    <property type="type" value="gene"/>
</dbReference>
<dbReference type="neXtProt" id="NX_O43508"/>
<dbReference type="OpenTargets" id="ENSG00000239697"/>
<dbReference type="OpenTargets" id="ENSG00000248871"/>
<dbReference type="Orphanet" id="1572">
    <property type="disease" value="Common variable immunodeficiency"/>
</dbReference>
<dbReference type="PharmGKB" id="PA162406662"/>
<dbReference type="PharmGKB" id="PA36620"/>
<dbReference type="VEuPathDB" id="HostDB:ENSG00000239697"/>
<dbReference type="eggNOG" id="ENOG502S27R">
    <property type="taxonomic scope" value="Eukaryota"/>
</dbReference>
<dbReference type="GeneTree" id="ENSGT00940000163167"/>
<dbReference type="HOGENOM" id="CLU_090519_0_0_1"/>
<dbReference type="InParanoid" id="O43508"/>
<dbReference type="OMA" id="RAGNICA"/>
<dbReference type="OrthoDB" id="6159739at2759"/>
<dbReference type="PAN-GO" id="O43508">
    <property type="GO annotations" value="3 GO annotations based on evolutionary models"/>
</dbReference>
<dbReference type="PhylomeDB" id="O43508"/>
<dbReference type="TreeFam" id="TF332331"/>
<dbReference type="PathwayCommons" id="O43508"/>
<dbReference type="Reactome" id="R-HSA-5668541">
    <property type="pathway name" value="TNFR2 non-canonical NF-kB pathway"/>
</dbReference>
<dbReference type="Reactome" id="R-HSA-5676594">
    <property type="pathway name" value="TNF receptor superfamily (TNFSF) members mediating non-canonical NF-kB pathway"/>
</dbReference>
<dbReference type="SignaLink" id="O43508"/>
<dbReference type="SIGNOR" id="O43508"/>
<dbReference type="BioGRID-ORCS" id="407977">
    <property type="hits" value="12 hits in 665 CRISPR screens"/>
</dbReference>
<dbReference type="BioGRID-ORCS" id="8742">
    <property type="hits" value="11 hits in 758 CRISPR screens"/>
</dbReference>
<dbReference type="EvolutionaryTrace" id="O43508"/>
<dbReference type="GeneWiki" id="TNFSF12"/>
<dbReference type="GeneWiki" id="TNFSF12-TNFSF13"/>
<dbReference type="Pharos" id="O43508">
    <property type="development level" value="Tbio"/>
</dbReference>
<dbReference type="PRO" id="PR:O43508"/>
<dbReference type="Proteomes" id="UP000005640">
    <property type="component" value="Chromosome 17"/>
</dbReference>
<dbReference type="RNAct" id="O43508">
    <property type="molecule type" value="protein"/>
</dbReference>
<dbReference type="Bgee" id="ENSG00000239697">
    <property type="expression patterns" value="Expressed in right coronary artery and 97 other cell types or tissues"/>
</dbReference>
<dbReference type="ExpressionAtlas" id="O43508">
    <property type="expression patterns" value="baseline and differential"/>
</dbReference>
<dbReference type="GO" id="GO:0005576">
    <property type="term" value="C:extracellular region"/>
    <property type="evidence" value="ECO:0000304"/>
    <property type="project" value="Reactome"/>
</dbReference>
<dbReference type="GO" id="GO:0005615">
    <property type="term" value="C:extracellular space"/>
    <property type="evidence" value="ECO:0000318"/>
    <property type="project" value="GO_Central"/>
</dbReference>
<dbReference type="GO" id="GO:0048471">
    <property type="term" value="C:perinuclear region of cytoplasm"/>
    <property type="evidence" value="ECO:0000314"/>
    <property type="project" value="UniProtKB"/>
</dbReference>
<dbReference type="GO" id="GO:0005886">
    <property type="term" value="C:plasma membrane"/>
    <property type="evidence" value="ECO:0000304"/>
    <property type="project" value="Reactome"/>
</dbReference>
<dbReference type="GO" id="GO:0005125">
    <property type="term" value="F:cytokine activity"/>
    <property type="evidence" value="ECO:0007669"/>
    <property type="project" value="UniProtKB-KW"/>
</dbReference>
<dbReference type="GO" id="GO:0048018">
    <property type="term" value="F:receptor ligand activity"/>
    <property type="evidence" value="ECO:0000318"/>
    <property type="project" value="GO_Central"/>
</dbReference>
<dbReference type="GO" id="GO:0005102">
    <property type="term" value="F:signaling receptor binding"/>
    <property type="evidence" value="ECO:0000304"/>
    <property type="project" value="ProtInc"/>
</dbReference>
<dbReference type="GO" id="GO:0005164">
    <property type="term" value="F:tumor necrosis factor receptor binding"/>
    <property type="evidence" value="ECO:0007669"/>
    <property type="project" value="InterPro"/>
</dbReference>
<dbReference type="GO" id="GO:0001525">
    <property type="term" value="P:angiogenesis"/>
    <property type="evidence" value="ECO:0007669"/>
    <property type="project" value="UniProtKB-KW"/>
</dbReference>
<dbReference type="GO" id="GO:0006915">
    <property type="term" value="P:apoptotic process"/>
    <property type="evidence" value="ECO:0000304"/>
    <property type="project" value="ProtInc"/>
</dbReference>
<dbReference type="GO" id="GO:0030154">
    <property type="term" value="P:cell differentiation"/>
    <property type="evidence" value="ECO:0007669"/>
    <property type="project" value="UniProtKB-KW"/>
</dbReference>
<dbReference type="GO" id="GO:0043542">
    <property type="term" value="P:endothelial cell migration"/>
    <property type="evidence" value="ECO:0000304"/>
    <property type="project" value="UniProtKB"/>
</dbReference>
<dbReference type="GO" id="GO:0097191">
    <property type="term" value="P:extrinsic apoptotic signaling pathway"/>
    <property type="evidence" value="ECO:0000318"/>
    <property type="project" value="GO_Central"/>
</dbReference>
<dbReference type="GO" id="GO:0006955">
    <property type="term" value="P:immune response"/>
    <property type="evidence" value="ECO:0007669"/>
    <property type="project" value="InterPro"/>
</dbReference>
<dbReference type="GO" id="GO:0045766">
    <property type="term" value="P:positive regulation of angiogenesis"/>
    <property type="evidence" value="ECO:0000304"/>
    <property type="project" value="UniProtKB"/>
</dbReference>
<dbReference type="GO" id="GO:0001938">
    <property type="term" value="P:positive regulation of endothelial cell proliferation"/>
    <property type="evidence" value="ECO:0000304"/>
    <property type="project" value="UniProtKB"/>
</dbReference>
<dbReference type="GO" id="GO:2001238">
    <property type="term" value="P:positive regulation of extrinsic apoptotic signaling pathway"/>
    <property type="evidence" value="ECO:0000314"/>
    <property type="project" value="UniProtKB"/>
</dbReference>
<dbReference type="GO" id="GO:0045732">
    <property type="term" value="P:positive regulation of protein catabolic process"/>
    <property type="evidence" value="ECO:0000314"/>
    <property type="project" value="MGI"/>
</dbReference>
<dbReference type="GO" id="GO:0007165">
    <property type="term" value="P:signal transduction"/>
    <property type="evidence" value="ECO:0000304"/>
    <property type="project" value="ProtInc"/>
</dbReference>
<dbReference type="CDD" id="cd00184">
    <property type="entry name" value="TNF"/>
    <property type="match status" value="1"/>
</dbReference>
<dbReference type="FunFam" id="2.60.120.40:FF:000022">
    <property type="entry name" value="Tumor necrosis factor ligand superfamily member 12"/>
    <property type="match status" value="1"/>
</dbReference>
<dbReference type="Gene3D" id="2.60.120.40">
    <property type="match status" value="1"/>
</dbReference>
<dbReference type="InterPro" id="IPR006052">
    <property type="entry name" value="TNF_dom"/>
</dbReference>
<dbReference type="InterPro" id="IPR051748">
    <property type="entry name" value="TNF_Ligand_Superfamily"/>
</dbReference>
<dbReference type="InterPro" id="IPR008983">
    <property type="entry name" value="Tumour_necrosis_fac-like_dom"/>
</dbReference>
<dbReference type="PANTHER" id="PTHR15151">
    <property type="entry name" value="PROTEIN EIGER"/>
    <property type="match status" value="1"/>
</dbReference>
<dbReference type="PANTHER" id="PTHR15151:SF20">
    <property type="entry name" value="TUMOR NECROSIS FACTOR LIGAND SUPERFAMILY MEMBER 12"/>
    <property type="match status" value="1"/>
</dbReference>
<dbReference type="Pfam" id="PF00229">
    <property type="entry name" value="TNF"/>
    <property type="match status" value="1"/>
</dbReference>
<dbReference type="SMART" id="SM00207">
    <property type="entry name" value="TNF"/>
    <property type="match status" value="1"/>
</dbReference>
<dbReference type="SUPFAM" id="SSF49842">
    <property type="entry name" value="TNF-like"/>
    <property type="match status" value="1"/>
</dbReference>
<dbReference type="PROSITE" id="PS50049">
    <property type="entry name" value="THD_2"/>
    <property type="match status" value="1"/>
</dbReference>
<reference key="1">
    <citation type="journal article" date="1997" name="J. Biol. Chem.">
        <title>TWEAK, a new secreted ligand in the tumor necrosis factor family that weakly induces apoptosis.</title>
        <authorList>
            <person name="Chicheportiche Y."/>
            <person name="Bourdon P.R."/>
            <person name="Xu H."/>
            <person name="Hsu Y.-M."/>
            <person name="Scott H."/>
            <person name="Hession C."/>
            <person name="Garcia I."/>
            <person name="Browning J.L."/>
        </authorList>
    </citation>
    <scope>NUCLEOTIDE SEQUENCE [MRNA] (ISOFORM 1)</scope>
    <scope>N-TERMINUS OF SOLUBLE FORM</scope>
    <source>
        <tissue>Fetal liver</tissue>
        <tissue>Tonsil</tissue>
    </source>
</reference>
<reference key="2">
    <citation type="journal article" date="1998" name="Curr. Biol.">
        <title>Identification of a ligand for the death-domain-containing receptor Apo3.</title>
        <authorList>
            <person name="Marsters S.A."/>
            <person name="Sheridan J.P."/>
            <person name="Pitti R.M."/>
            <person name="Brush J."/>
            <person name="Goddard A."/>
            <person name="Ashkenazi A."/>
        </authorList>
    </citation>
    <scope>NUCLEOTIDE SEQUENCE [MRNA] (ISOFORM 1)</scope>
    <source>
        <tissue>Fetal kidney</tissue>
    </source>
</reference>
<reference key="3">
    <citation type="journal article" date="2002" name="EMBO J.">
        <title>An endogenous hybrid mRNA encodes TWE-PRIL, a functional cell surface TWEAK-APRIL fusion protein.</title>
        <authorList>
            <person name="Pradet-Balade B."/>
            <person name="Medema J.P."/>
            <person name="Lopez-Fraga M."/>
            <person name="Lozano J.C."/>
            <person name="Kolfschoten G.M."/>
            <person name="Picard A."/>
            <person name="Martinez-A C."/>
            <person name="Garcia-Sanz J.A."/>
            <person name="Hahne M."/>
        </authorList>
    </citation>
    <scope>NUCLEOTIDE SEQUENCE [MRNA] (ISOFORM TWE-PRIL)</scope>
    <scope>SUBCELLULAR LOCATION</scope>
</reference>
<reference key="4">
    <citation type="journal article" date="2003" name="Genome Res.">
        <title>The secreted protein discovery initiative (SPDI), a large-scale effort to identify novel human secreted and transmembrane proteins: a bioinformatics assessment.</title>
        <authorList>
            <person name="Clark H.F."/>
            <person name="Gurney A.L."/>
            <person name="Abaya E."/>
            <person name="Baker K."/>
            <person name="Baldwin D.T."/>
            <person name="Brush J."/>
            <person name="Chen J."/>
            <person name="Chow B."/>
            <person name="Chui C."/>
            <person name="Crowley C."/>
            <person name="Currell B."/>
            <person name="Deuel B."/>
            <person name="Dowd P."/>
            <person name="Eaton D."/>
            <person name="Foster J.S."/>
            <person name="Grimaldi C."/>
            <person name="Gu Q."/>
            <person name="Hass P.E."/>
            <person name="Heldens S."/>
            <person name="Huang A."/>
            <person name="Kim H.S."/>
            <person name="Klimowski L."/>
            <person name="Jin Y."/>
            <person name="Johnson S."/>
            <person name="Lee J."/>
            <person name="Lewis L."/>
            <person name="Liao D."/>
            <person name="Mark M.R."/>
            <person name="Robbie E."/>
            <person name="Sanchez C."/>
            <person name="Schoenfeld J."/>
            <person name="Seshagiri S."/>
            <person name="Simmons L."/>
            <person name="Singh J."/>
            <person name="Smith V."/>
            <person name="Stinson J."/>
            <person name="Vagts A."/>
            <person name="Vandlen R.L."/>
            <person name="Watanabe C."/>
            <person name="Wieand D."/>
            <person name="Woods K."/>
            <person name="Xie M.-H."/>
            <person name="Yansura D.G."/>
            <person name="Yi S."/>
            <person name="Yu G."/>
            <person name="Yuan J."/>
            <person name="Zhang M."/>
            <person name="Zhang Z."/>
            <person name="Goddard A.D."/>
            <person name="Wood W.I."/>
            <person name="Godowski P.J."/>
            <person name="Gray A.M."/>
        </authorList>
    </citation>
    <scope>NUCLEOTIDE SEQUENCE [LARGE SCALE MRNA] (ISOFORM 1)</scope>
</reference>
<reference key="5">
    <citation type="journal article" date="2006" name="Nature">
        <title>DNA sequence of human chromosome 17 and analysis of rearrangement in the human lineage.</title>
        <authorList>
            <person name="Zody M.C."/>
            <person name="Garber M."/>
            <person name="Adams D.J."/>
            <person name="Sharpe T."/>
            <person name="Harrow J."/>
            <person name="Lupski J.R."/>
            <person name="Nicholson C."/>
            <person name="Searle S.M."/>
            <person name="Wilming L."/>
            <person name="Young S.K."/>
            <person name="Abouelleil A."/>
            <person name="Allen N.R."/>
            <person name="Bi W."/>
            <person name="Bloom T."/>
            <person name="Borowsky M.L."/>
            <person name="Bugalter B.E."/>
            <person name="Butler J."/>
            <person name="Chang J.L."/>
            <person name="Chen C.-K."/>
            <person name="Cook A."/>
            <person name="Corum B."/>
            <person name="Cuomo C.A."/>
            <person name="de Jong P.J."/>
            <person name="DeCaprio D."/>
            <person name="Dewar K."/>
            <person name="FitzGerald M."/>
            <person name="Gilbert J."/>
            <person name="Gibson R."/>
            <person name="Gnerre S."/>
            <person name="Goldstein S."/>
            <person name="Grafham D.V."/>
            <person name="Grocock R."/>
            <person name="Hafez N."/>
            <person name="Hagopian D.S."/>
            <person name="Hart E."/>
            <person name="Norman C.H."/>
            <person name="Humphray S."/>
            <person name="Jaffe D.B."/>
            <person name="Jones M."/>
            <person name="Kamal M."/>
            <person name="Khodiyar V.K."/>
            <person name="LaButti K."/>
            <person name="Laird G."/>
            <person name="Lehoczky J."/>
            <person name="Liu X."/>
            <person name="Lokyitsang T."/>
            <person name="Loveland J."/>
            <person name="Lui A."/>
            <person name="Macdonald P."/>
            <person name="Major J.E."/>
            <person name="Matthews L."/>
            <person name="Mauceli E."/>
            <person name="McCarroll S.A."/>
            <person name="Mihalev A.H."/>
            <person name="Mudge J."/>
            <person name="Nguyen C."/>
            <person name="Nicol R."/>
            <person name="O'Leary S.B."/>
            <person name="Osoegawa K."/>
            <person name="Schwartz D.C."/>
            <person name="Shaw-Smith C."/>
            <person name="Stankiewicz P."/>
            <person name="Steward C."/>
            <person name="Swarbreck D."/>
            <person name="Venkataraman V."/>
            <person name="Whittaker C.A."/>
            <person name="Yang X."/>
            <person name="Zimmer A.R."/>
            <person name="Bradley A."/>
            <person name="Hubbard T."/>
            <person name="Birren B.W."/>
            <person name="Rogers J."/>
            <person name="Lander E.S."/>
            <person name="Nusbaum C."/>
        </authorList>
    </citation>
    <scope>NUCLEOTIDE SEQUENCE [LARGE SCALE GENOMIC DNA]</scope>
</reference>
<reference key="6">
    <citation type="journal article" date="2004" name="Genome Res.">
        <title>The status, quality, and expansion of the NIH full-length cDNA project: the Mammalian Gene Collection (MGC).</title>
        <authorList>
            <consortium name="The MGC Project Team"/>
        </authorList>
    </citation>
    <scope>NUCLEOTIDE SEQUENCE [LARGE SCALE MRNA] (ISOFORM 1)</scope>
    <source>
        <tissue>Tonsil</tissue>
    </source>
</reference>
<reference key="7">
    <citation type="journal article" date="1999" name="J. Biol. Chem.">
        <title>TWEAK induces angiogenesis and proliferation of endothelial cells.</title>
        <authorList>
            <person name="Lynch C.N."/>
            <person name="Wang Y.C."/>
            <person name="Lund J.K."/>
            <person name="Chen Y.-W."/>
            <person name="Leal J.A."/>
            <person name="Wiley S.R."/>
        </authorList>
    </citation>
    <scope>FUNCTION</scope>
</reference>
<reference key="8">
    <citation type="journal article" date="2004" name="Nature">
        <title>Identification of an angiogenic factor that when mutated causes susceptibility to Klippel-Trenaunay syndrome.</title>
        <authorList>
            <person name="Tian X.-L."/>
            <person name="Kadaba R."/>
            <person name="You S.-A."/>
            <person name="Liu M."/>
            <person name="Timur A.A."/>
            <person name="Yang L."/>
            <person name="Chen Q."/>
            <person name="Szafranski P."/>
            <person name="Rao S."/>
            <person name="Wu L."/>
            <person name="Housman D.E."/>
            <person name="DiCorleto P.E."/>
            <person name="Driscoll D.J."/>
            <person name="Borrow J."/>
            <person name="Wang Q."/>
        </authorList>
    </citation>
    <scope>INTERACTION WITH AGGF1/VG5Q</scope>
</reference>
<reference key="9">
    <citation type="journal article" date="2003" name="Cytokine Growth Factor Rev.">
        <title>TWEAK, a member of the TNF superfamily, is a multifunctional cytokine that binds the TweakR/Fn14 receptor.</title>
        <authorList>
            <person name="Wiley S.R."/>
            <person name="Winkles J.A."/>
        </authorList>
    </citation>
    <scope>REVIEW</scope>
</reference>
<reference key="10">
    <citation type="journal article" date="2013" name="PLoS ONE">
        <title>Crystal structure of human TWEAK in complex with the Fab fragment of a neutralizing antibody reveals insights into receptor binding.</title>
        <authorList>
            <person name="Lammens A."/>
            <person name="Baehner M."/>
            <person name="Kohnert U."/>
            <person name="Niewoehner J."/>
            <person name="von Proff L."/>
            <person name="Schraeml M."/>
            <person name="Lammens K."/>
            <person name="Hopfner K.P."/>
        </authorList>
    </citation>
    <scope>X-RAY CRYSTALLOGRAPHY (2.5 ANGSTROMS) OF 97-249 IN COMPLEX WITH THE FAB FRAGMENT OF A NEUTRALIZING ANTIBODY</scope>
    <scope>FUNCTION</scope>
    <scope>SUBUNIT</scope>
    <scope>DISULFIDE BOND</scope>
</reference>
<evidence type="ECO:0000255" key="1"/>
<evidence type="ECO:0000255" key="2">
    <source>
        <dbReference type="PROSITE-ProRule" id="PRU01387"/>
    </source>
</evidence>
<evidence type="ECO:0000256" key="3">
    <source>
        <dbReference type="SAM" id="MobiDB-lite"/>
    </source>
</evidence>
<evidence type="ECO:0000269" key="4">
    <source>
    </source>
</evidence>
<evidence type="ECO:0000269" key="5">
    <source>
    </source>
</evidence>
<evidence type="ECO:0000269" key="6">
    <source>
    </source>
</evidence>
<evidence type="ECO:0000269" key="7">
    <source>
    </source>
</evidence>
<evidence type="ECO:0000303" key="8">
    <source>
    </source>
</evidence>
<evidence type="ECO:0000305" key="9"/>
<evidence type="ECO:0007829" key="10">
    <source>
        <dbReference type="PDB" id="4HT1"/>
    </source>
</evidence>
<name>TNF12_HUMAN</name>
<keyword id="KW-0002">3D-structure</keyword>
<keyword id="KW-0025">Alternative splicing</keyword>
<keyword id="KW-0037">Angiogenesis</keyword>
<keyword id="KW-0053">Apoptosis</keyword>
<keyword id="KW-1003">Cell membrane</keyword>
<keyword id="KW-0165">Cleavage on pair of basic residues</keyword>
<keyword id="KW-0202">Cytokine</keyword>
<keyword id="KW-0217">Developmental protein</keyword>
<keyword id="KW-0221">Differentiation</keyword>
<keyword id="KW-1015">Disulfide bond</keyword>
<keyword id="KW-0325">Glycoprotein</keyword>
<keyword id="KW-0472">Membrane</keyword>
<keyword id="KW-1267">Proteomics identification</keyword>
<keyword id="KW-1185">Reference proteome</keyword>
<keyword id="KW-0964">Secreted</keyword>
<keyword id="KW-0735">Signal-anchor</keyword>
<keyword id="KW-0812">Transmembrane</keyword>
<keyword id="KW-1133">Transmembrane helix</keyword>
<protein>
    <recommendedName>
        <fullName>Tumor necrosis factor ligand superfamily member 12</fullName>
    </recommendedName>
    <alternativeName>
        <fullName>APO3 ligand</fullName>
    </alternativeName>
    <alternativeName>
        <fullName>TNF-related weak inducer of apoptosis</fullName>
        <shortName>TWEAK</shortName>
    </alternativeName>
    <component>
        <recommendedName>
            <fullName>Tumor necrosis factor ligand superfamily member 12, membrane form</fullName>
        </recommendedName>
    </component>
    <component>
        <recommendedName>
            <fullName>Tumor necrosis factor ligand superfamily member 12, secreted form</fullName>
        </recommendedName>
    </component>
</protein>
<proteinExistence type="evidence at protein level"/>
<accession>O43508</accession>
<accession>Q8IZK7</accession>
<accession>Q8WUZ7</accession>
<gene>
    <name type="primary">TNFSF12</name>
    <name type="synonym">APO3L</name>
    <name type="synonym">DR3LG</name>
    <name type="ORF">UNQ181/PRO207</name>
</gene>
<sequence>MAARRSQRRRGRRGEPGTALLVPLALGLGLALACLGLLLAVVSLGSRASLSAQEPAQEELVAEEDQDPSELNPQTEESQDPAPFLNRLVRPRRSAPKGRKTRARRAIAAHYEVHPRPGQDGAQAGVDGTVSGWEEARINSSSPLRYNRQIGEFIVTRAGLYYLYCQVHFDEGKAVYLKLDLLVDGVLALRCLEEFSATAASSLGPQLRLCQVSGLLALRPGSSLRIRTLPWAHLKAAPFLTYFGLFQVH</sequence>
<comment type="function">
    <text evidence="4 7">Binds to FN14 and possibly also to TNRFSF12/APO3. Weak inducer of apoptosis in some cell types. Mediates NF-kappa-B activation. Promotes angiogenesis and the proliferation of endothelial cells. Also involved in induction of inflammatory cytokines. Promotes IL8 secretion.</text>
</comment>
<comment type="subunit">
    <text evidence="6 7 9">Homotrimer (Probable). Interacts with the angiogenic factor AGGF1/VG5Q.</text>
</comment>
<comment type="interaction">
    <interactant intactId="EBI-6932080">
        <id>O43508</id>
    </interactant>
    <interactant intactId="EBI-77613">
        <id>P05067</id>
        <label>APP</label>
    </interactant>
    <organismsDiffer>false</organismsDiffer>
    <experiments>3</experiments>
</comment>
<comment type="interaction">
    <interactant intactId="EBI-6932080">
        <id>O43508</id>
    </interactant>
    <interactant intactId="EBI-444308">
        <id>P06493</id>
        <label>CDK1</label>
    </interactant>
    <organismsDiffer>false</organismsDiffer>
    <experiments>3</experiments>
</comment>
<comment type="interaction">
    <interactant intactId="EBI-6932080">
        <id>O43508</id>
    </interactant>
    <interactant intactId="EBI-742651">
        <id>P35638</id>
        <label>DDIT3</label>
    </interactant>
    <organismsDiffer>false</organismsDiffer>
    <experiments>3</experiments>
</comment>
<comment type="interaction">
    <interactant intactId="EBI-6932080">
        <id>O43508</id>
    </interactant>
    <interactant intactId="EBI-395506">
        <id>Q9UPY3</id>
        <label>DICER1</label>
    </interactant>
    <organismsDiffer>false</organismsDiffer>
    <experiments>3</experiments>
</comment>
<comment type="interaction">
    <interactant intactId="EBI-6932080">
        <id>O43508</id>
    </interactant>
    <interactant intactId="EBI-347996">
        <id>O43765</id>
        <label>SGTA</label>
    </interactant>
    <organismsDiffer>false</organismsDiffer>
    <experiments>3</experiments>
</comment>
<comment type="interaction">
    <interactant intactId="EBI-6932080">
        <id>O43508</id>
    </interactant>
    <interactant intactId="EBI-2851995">
        <id>Q9NP84</id>
        <label>TNFRSF12A</label>
    </interactant>
    <organismsDiffer>false</organismsDiffer>
    <experiments>2</experiments>
</comment>
<comment type="interaction">
    <interactant intactId="EBI-6932080">
        <id>O43508</id>
    </interactant>
    <interactant intactId="EBI-8445678">
        <id>Q6SIX7</id>
        <label>tnfrsf12a.L</label>
    </interactant>
    <organismsDiffer>true</organismsDiffer>
    <experiments>2</experiments>
</comment>
<comment type="subcellular location">
    <subcellularLocation>
        <location evidence="5">Cell membrane</location>
        <topology evidence="5">Single-pass type II membrane protein</topology>
    </subcellularLocation>
</comment>
<comment type="subcellular location">
    <molecule>Tumor necrosis factor ligand superfamily member 12, secreted form</molecule>
    <subcellularLocation>
        <location>Secreted</location>
    </subcellularLocation>
</comment>
<comment type="subcellular location">
    <molecule>Isoform TWE-PRIL</molecule>
    <subcellularLocation>
        <location>Cell membrane</location>
        <topology>Single-pass membrane protein</topology>
    </subcellularLocation>
</comment>
<comment type="alternative products">
    <event type="alternative splicing"/>
    <isoform>
        <id>O43508-1</id>
        <name>1</name>
        <sequence type="displayed"/>
    </isoform>
    <isoform>
        <id>O43508-2</id>
        <name>TWE-PRIL</name>
        <name>TNFSF12-TNFSF13</name>
        <sequence type="described" ref="VSP_045245"/>
    </isoform>
</comment>
<comment type="tissue specificity">
    <text>Highly expressed in adult heart, pancreas, skeletal muscle, brain, colon, small intestine, lung, ovary, prostate, spleen, lymph node, appendix and peripheral blood lymphocytes. Low expression in kidney, testis, liver, placenta, thymus and bone marrow. Also detected in fetal kidney, liver, lung and brain.</text>
</comment>
<comment type="PTM">
    <text>The soluble form derives from the membrane form by proteolytic processing.</text>
</comment>
<comment type="miscellaneous">
    <molecule>Isoform TWE-PRIL</molecule>
    <text evidence="9">Based on a readthrough transcript which may produce a TWE-PRIL (TNFSF12-TNFSF13) fusion protein. Expressed at protein level in primary T-lymphocytes and monocytic cell lines.</text>
</comment>
<comment type="similarity">
    <text evidence="9">Belongs to the tumor necrosis factor family.</text>
</comment>
<comment type="sequence caution" evidence="9">
    <conflict type="frameshift">
        <sequence resource="EMBL-CDS" id="AAH19047"/>
    </conflict>
</comment>
<organism>
    <name type="scientific">Homo sapiens</name>
    <name type="common">Human</name>
    <dbReference type="NCBI Taxonomy" id="9606"/>
    <lineage>
        <taxon>Eukaryota</taxon>
        <taxon>Metazoa</taxon>
        <taxon>Chordata</taxon>
        <taxon>Craniata</taxon>
        <taxon>Vertebrata</taxon>
        <taxon>Euteleostomi</taxon>
        <taxon>Mammalia</taxon>
        <taxon>Eutheria</taxon>
        <taxon>Euarchontoglires</taxon>
        <taxon>Primates</taxon>
        <taxon>Haplorrhini</taxon>
        <taxon>Catarrhini</taxon>
        <taxon>Hominidae</taxon>
        <taxon>Homo</taxon>
    </lineage>
</organism>
<feature type="chain" id="PRO_0000034520" description="Tumor necrosis factor ligand superfamily member 12, membrane form">
    <location>
        <begin position="1"/>
        <end position="249"/>
    </location>
</feature>
<feature type="chain" id="PRO_0000034521" description="Tumor necrosis factor ligand superfamily member 12, secreted form">
    <location>
        <begin position="94"/>
        <end position="249"/>
    </location>
</feature>
<feature type="topological domain" description="Cytoplasmic" evidence="1">
    <location>
        <begin position="1"/>
        <end position="21"/>
    </location>
</feature>
<feature type="transmembrane region" description="Helical; Signal-anchor for type II membrane protein" evidence="1">
    <location>
        <begin position="22"/>
        <end position="42"/>
    </location>
</feature>
<feature type="topological domain" description="Extracellular" evidence="1">
    <location>
        <begin position="43"/>
        <end position="249"/>
    </location>
</feature>
<feature type="domain" description="THD" evidence="2">
    <location>
        <begin position="107"/>
        <end position="248"/>
    </location>
</feature>
<feature type="region of interest" description="Disordered" evidence="3">
    <location>
        <begin position="55"/>
        <end position="85"/>
    </location>
</feature>
<feature type="compositionally biased region" description="Acidic residues" evidence="3">
    <location>
        <begin position="56"/>
        <end position="68"/>
    </location>
</feature>
<feature type="site" description="Cleavage">
    <location>
        <begin position="93"/>
        <end position="94"/>
    </location>
</feature>
<feature type="glycosylation site" description="N-linked (GlcNAc...) asparagine">
    <location>
        <position position="139"/>
    </location>
</feature>
<feature type="disulfide bond" evidence="2 7">
    <location>
        <begin position="191"/>
        <end position="210"/>
    </location>
</feature>
<feature type="splice variant" id="VSP_045245" description="In isoform TWE-PRIL." evidence="8">
    <original>VHFDEGKAVYLKLDLLVDGVLALRCLEEFSATAASSLGPQLRLCQVSGLLALRPGSSLRIRTLPWAHLKAAPFLTYFGLFQVH</original>
    <variation>SSDALEAWENGERSRKRRAVLTQKQKKQHSVLHLVPINATSKDDSDVTEVMWQPALRRGRGLQAQGYGVRIQDAGVYLLYSQVLFQDVTFTMGQVVSREGQGRQETLFRCIRSMPSHPDRAYNSCYSAGVFHLHQGDILSVIIPRARAKLNLSPHGTFLGFVKL</variation>
    <location>
        <begin position="167"/>
        <end position="249"/>
    </location>
</feature>
<feature type="strand" evidence="10">
    <location>
        <begin position="108"/>
        <end position="113"/>
    </location>
</feature>
<feature type="strand" evidence="10">
    <location>
        <begin position="133"/>
        <end position="135"/>
    </location>
</feature>
<feature type="strand" evidence="10">
    <location>
        <begin position="143"/>
        <end position="146"/>
    </location>
</feature>
<feature type="turn" evidence="10">
    <location>
        <begin position="148"/>
        <end position="150"/>
    </location>
</feature>
<feature type="strand" evidence="10">
    <location>
        <begin position="153"/>
        <end position="155"/>
    </location>
</feature>
<feature type="strand" evidence="10">
    <location>
        <begin position="159"/>
        <end position="173"/>
    </location>
</feature>
<feature type="strand" evidence="10">
    <location>
        <begin position="175"/>
        <end position="183"/>
    </location>
</feature>
<feature type="strand" evidence="10">
    <location>
        <begin position="186"/>
        <end position="193"/>
    </location>
</feature>
<feature type="strand" evidence="10">
    <location>
        <begin position="205"/>
        <end position="218"/>
    </location>
</feature>
<feature type="strand" evidence="10">
    <location>
        <begin position="223"/>
        <end position="227"/>
    </location>
</feature>
<feature type="turn" evidence="10">
    <location>
        <begin position="238"/>
        <end position="240"/>
    </location>
</feature>
<feature type="strand" evidence="10">
    <location>
        <begin position="241"/>
        <end position="247"/>
    </location>
</feature>